<dbReference type="EMBL" id="CP000828">
    <property type="protein sequence ID" value="ABW29456.1"/>
    <property type="molecule type" value="Genomic_DNA"/>
</dbReference>
<dbReference type="RefSeq" id="WP_012164771.1">
    <property type="nucleotide sequence ID" value="NC_009925.1"/>
</dbReference>
<dbReference type="SMR" id="B0CG09"/>
<dbReference type="STRING" id="329726.AM1_4479"/>
<dbReference type="KEGG" id="amr:AM1_4479"/>
<dbReference type="eggNOG" id="ENOG502Z8DN">
    <property type="taxonomic scope" value="Bacteria"/>
</dbReference>
<dbReference type="HOGENOM" id="CLU_690401_0_0_3"/>
<dbReference type="OrthoDB" id="418298at2"/>
<dbReference type="Proteomes" id="UP000000268">
    <property type="component" value="Chromosome"/>
</dbReference>
<dbReference type="GO" id="GO:0005886">
    <property type="term" value="C:plasma membrane"/>
    <property type="evidence" value="ECO:0007669"/>
    <property type="project" value="UniProtKB-SubCell"/>
</dbReference>
<dbReference type="GO" id="GO:0015078">
    <property type="term" value="F:proton transmembrane transporter activity"/>
    <property type="evidence" value="ECO:0007669"/>
    <property type="project" value="UniProtKB-UniRule"/>
</dbReference>
<dbReference type="HAMAP" id="MF_01308">
    <property type="entry name" value="CemA_PxcA"/>
    <property type="match status" value="1"/>
</dbReference>
<dbReference type="InterPro" id="IPR004282">
    <property type="entry name" value="CemA"/>
</dbReference>
<dbReference type="NCBIfam" id="NF002706">
    <property type="entry name" value="PRK02507.1-5"/>
    <property type="match status" value="1"/>
</dbReference>
<dbReference type="PANTHER" id="PTHR33650:SF2">
    <property type="entry name" value="CHLOROPLAST ENVELOPE MEMBRANE PROTEIN"/>
    <property type="match status" value="1"/>
</dbReference>
<dbReference type="PANTHER" id="PTHR33650">
    <property type="entry name" value="CHLOROPLAST ENVELOPE MEMBRANE PROTEIN-RELATED"/>
    <property type="match status" value="1"/>
</dbReference>
<dbReference type="Pfam" id="PF03040">
    <property type="entry name" value="CemA"/>
    <property type="match status" value="1"/>
</dbReference>
<protein>
    <recommendedName>
        <fullName evidence="1">Proton extrusion protein PxcA</fullName>
    </recommendedName>
</protein>
<name>PXCA_ACAM1</name>
<feature type="chain" id="PRO_0000346536" description="Proton extrusion protein PxcA">
    <location>
        <begin position="1"/>
        <end position="482"/>
    </location>
</feature>
<feature type="transmembrane region" description="Helical" evidence="1">
    <location>
        <begin position="265"/>
        <end position="285"/>
    </location>
</feature>
<feature type="transmembrane region" description="Helical" evidence="1">
    <location>
        <begin position="359"/>
        <end position="379"/>
    </location>
</feature>
<feature type="transmembrane region" description="Helical" evidence="1">
    <location>
        <begin position="406"/>
        <end position="426"/>
    </location>
</feature>
<feature type="transmembrane region" description="Helical" evidence="1">
    <location>
        <begin position="442"/>
        <end position="462"/>
    </location>
</feature>
<reference key="1">
    <citation type="journal article" date="2008" name="Proc. Natl. Acad. Sci. U.S.A.">
        <title>Niche adaptation and genome expansion in the chlorophyll d-producing cyanobacterium Acaryochloris marina.</title>
        <authorList>
            <person name="Swingley W.D."/>
            <person name="Chen M."/>
            <person name="Cheung P.C."/>
            <person name="Conrad A.L."/>
            <person name="Dejesa L.C."/>
            <person name="Hao J."/>
            <person name="Honchak B.M."/>
            <person name="Karbach L.E."/>
            <person name="Kurdoglu A."/>
            <person name="Lahiri S."/>
            <person name="Mastrian S.D."/>
            <person name="Miyashita H."/>
            <person name="Page L."/>
            <person name="Ramakrishna P."/>
            <person name="Satoh S."/>
            <person name="Sattley W.M."/>
            <person name="Shimada Y."/>
            <person name="Taylor H.L."/>
            <person name="Tomo T."/>
            <person name="Tsuchiya T."/>
            <person name="Wang Z.T."/>
            <person name="Raymond J."/>
            <person name="Mimuro M."/>
            <person name="Blankenship R.E."/>
            <person name="Touchman J.W."/>
        </authorList>
    </citation>
    <scope>NUCLEOTIDE SEQUENCE [LARGE SCALE GENOMIC DNA]</scope>
    <source>
        <strain>MBIC 11017</strain>
    </source>
</reference>
<evidence type="ECO:0000255" key="1">
    <source>
        <dbReference type="HAMAP-Rule" id="MF_01308"/>
    </source>
</evidence>
<proteinExistence type="inferred from homology"/>
<keyword id="KW-0997">Cell inner membrane</keyword>
<keyword id="KW-1003">Cell membrane</keyword>
<keyword id="KW-0375">Hydrogen ion transport</keyword>
<keyword id="KW-0406">Ion transport</keyword>
<keyword id="KW-0472">Membrane</keyword>
<keyword id="KW-1185">Reference proteome</keyword>
<keyword id="KW-0812">Transmembrane</keyword>
<keyword id="KW-1133">Transmembrane helix</keyword>
<keyword id="KW-0813">Transport</keyword>
<accession>B0CG09</accession>
<comment type="function">
    <text evidence="1">Required for H(+) efflux immediately after light irradiation to form a rapid H(+) concentration gradient across the thylakoid membranes. Together with PxcL, contributes to transient H(+) uptake following dark to light transition.</text>
</comment>
<comment type="subcellular location">
    <subcellularLocation>
        <location evidence="1">Cell inner membrane</location>
        <topology evidence="1">Multi-pass membrane protein</topology>
    </subcellularLocation>
</comment>
<comment type="similarity">
    <text evidence="1">Belongs to the CemA family.</text>
</comment>
<sequence>MSSSSPNPFRRSLKFVEQWYRETPQRALDGAYEAARAIEEIEKKHFKGQPVPLRIRTESVMTNYFQSEVQKNLQFIQTRLREFKSSSLVVEVADKLKPPSIPPAPTPLDTPNTIDFTDEYDVTSEEYSSELVSPSIDAQGSLDKLAFIDAVLKRYRSASIQREAAAAASKAARASAPKSGSEMKKNIPQPLPIQSAQNSLYESEFISDDITEDPSKLDSSSFIPRSILRTATRFRKELNPDPGTEDDILNDFRNSRVRTRAAVSFVLGLMIVPLLTQQVSKNLVIGPFVDKLKGPEQIEIRINPEIENEVLTELARFEERLKFESLTSPIPLSPAEIQFQLKAKAEDLKEEYQWDLRQPLKNAISDLFSLVALAIYFVLNRQKIAVLKSFFDEIIYGLSDSAKAFIIILFTDVFVGFHSPHGWEVIVESVLSHFGLPQDRNFINMFIATFPVMLDTVFKYWIFRYLNQISPSAVATYRNMNE</sequence>
<gene>
    <name evidence="1" type="primary">pxcA</name>
    <name type="ordered locus">AM1_4479</name>
</gene>
<organism>
    <name type="scientific">Acaryochloris marina (strain MBIC 11017)</name>
    <dbReference type="NCBI Taxonomy" id="329726"/>
    <lineage>
        <taxon>Bacteria</taxon>
        <taxon>Bacillati</taxon>
        <taxon>Cyanobacteriota</taxon>
        <taxon>Cyanophyceae</taxon>
        <taxon>Acaryochloridales</taxon>
        <taxon>Acaryochloridaceae</taxon>
        <taxon>Acaryochloris</taxon>
    </lineage>
</organism>